<evidence type="ECO:0000255" key="1">
    <source>
        <dbReference type="HAMAP-Rule" id="MF_01398"/>
    </source>
</evidence>
<comment type="function">
    <text evidence="1">F(1)F(0) ATP synthase produces ATP from ADP in the presence of a proton or sodium gradient. F-type ATPases consist of two structural domains, F(1) containing the extramembraneous catalytic core and F(0) containing the membrane proton channel, linked together by a central stalk and a peripheral stalk. During catalysis, ATP synthesis in the catalytic domain of F(1) is coupled via a rotary mechanism of the central stalk subunits to proton translocation.</text>
</comment>
<comment type="function">
    <text evidence="1">Component of the F(0) channel, it forms part of the peripheral stalk, linking F(1) to F(0).</text>
</comment>
<comment type="subunit">
    <text evidence="1">F-type ATPases have 2 components, F(1) - the catalytic core - and F(0) - the membrane proton channel. F(1) has five subunits: alpha(3), beta(3), gamma(1), delta(1), epsilon(1). F(0) has three main subunits: a(1), b(2) and c(10-14). The alpha and beta chains form an alternating ring which encloses part of the gamma chain. F(1) is attached to F(0) by a central stalk formed by the gamma and epsilon chains, while a peripheral stalk is formed by the delta and b chains.</text>
</comment>
<comment type="subcellular location">
    <subcellularLocation>
        <location evidence="1">Cell membrane</location>
        <topology evidence="1">Single-pass membrane protein</topology>
    </subcellularLocation>
</comment>
<comment type="similarity">
    <text evidence="1">Belongs to the ATPase B chain family.</text>
</comment>
<sequence length="168" mass="18957">MPTLLLGAAIPFGTIAYTLFIFLLLLVMLRKFAWGPLMGIMKEREEHVANEIDAAERNNAEAKKLVEEQREMLKQSRVEAQELIERAKKQAVDQKDVIVAAAKEEAESIKASAVQEIQREKEQAIAALQEQVASLSVQIASKVIEKELKEEDQVKLIRDYIKEVGEAR</sequence>
<organism>
    <name type="scientific">Bacillus cereus (strain ZK / E33L)</name>
    <dbReference type="NCBI Taxonomy" id="288681"/>
    <lineage>
        <taxon>Bacteria</taxon>
        <taxon>Bacillati</taxon>
        <taxon>Bacillota</taxon>
        <taxon>Bacilli</taxon>
        <taxon>Bacillales</taxon>
        <taxon>Bacillaceae</taxon>
        <taxon>Bacillus</taxon>
        <taxon>Bacillus cereus group</taxon>
    </lineage>
</organism>
<dbReference type="EMBL" id="CP000001">
    <property type="protein sequence ID" value="AAU15272.1"/>
    <property type="molecule type" value="Genomic_DNA"/>
</dbReference>
<dbReference type="RefSeq" id="WP_001142616.1">
    <property type="nucleotide sequence ID" value="NZ_CP009968.1"/>
</dbReference>
<dbReference type="SMR" id="Q630T9"/>
<dbReference type="GeneID" id="45025139"/>
<dbReference type="KEGG" id="bcz:BCE33L5009"/>
<dbReference type="PATRIC" id="fig|288681.22.peg.337"/>
<dbReference type="Proteomes" id="UP000002612">
    <property type="component" value="Chromosome"/>
</dbReference>
<dbReference type="GO" id="GO:0005886">
    <property type="term" value="C:plasma membrane"/>
    <property type="evidence" value="ECO:0007669"/>
    <property type="project" value="UniProtKB-SubCell"/>
</dbReference>
<dbReference type="GO" id="GO:0045259">
    <property type="term" value="C:proton-transporting ATP synthase complex"/>
    <property type="evidence" value="ECO:0007669"/>
    <property type="project" value="UniProtKB-KW"/>
</dbReference>
<dbReference type="GO" id="GO:0046933">
    <property type="term" value="F:proton-transporting ATP synthase activity, rotational mechanism"/>
    <property type="evidence" value="ECO:0007669"/>
    <property type="project" value="UniProtKB-UniRule"/>
</dbReference>
<dbReference type="GO" id="GO:0046961">
    <property type="term" value="F:proton-transporting ATPase activity, rotational mechanism"/>
    <property type="evidence" value="ECO:0007669"/>
    <property type="project" value="TreeGrafter"/>
</dbReference>
<dbReference type="CDD" id="cd06503">
    <property type="entry name" value="ATP-synt_Fo_b"/>
    <property type="match status" value="1"/>
</dbReference>
<dbReference type="Gene3D" id="6.10.250.1580">
    <property type="match status" value="1"/>
</dbReference>
<dbReference type="HAMAP" id="MF_01398">
    <property type="entry name" value="ATP_synth_b_bprime"/>
    <property type="match status" value="1"/>
</dbReference>
<dbReference type="InterPro" id="IPR028987">
    <property type="entry name" value="ATP_synth_B-like_membr_sf"/>
</dbReference>
<dbReference type="InterPro" id="IPR002146">
    <property type="entry name" value="ATP_synth_b/b'su_bac/chlpt"/>
</dbReference>
<dbReference type="InterPro" id="IPR005864">
    <property type="entry name" value="ATP_synth_F0_bsu_bac"/>
</dbReference>
<dbReference type="InterPro" id="IPR050059">
    <property type="entry name" value="ATP_synthase_B_chain"/>
</dbReference>
<dbReference type="NCBIfam" id="TIGR01144">
    <property type="entry name" value="ATP_synt_b"/>
    <property type="match status" value="1"/>
</dbReference>
<dbReference type="PANTHER" id="PTHR33445:SF1">
    <property type="entry name" value="ATP SYNTHASE SUBUNIT B"/>
    <property type="match status" value="1"/>
</dbReference>
<dbReference type="PANTHER" id="PTHR33445">
    <property type="entry name" value="ATP SYNTHASE SUBUNIT B', CHLOROPLASTIC"/>
    <property type="match status" value="1"/>
</dbReference>
<dbReference type="Pfam" id="PF00430">
    <property type="entry name" value="ATP-synt_B"/>
    <property type="match status" value="1"/>
</dbReference>
<dbReference type="SUPFAM" id="SSF81573">
    <property type="entry name" value="F1F0 ATP synthase subunit B, membrane domain"/>
    <property type="match status" value="1"/>
</dbReference>
<accession>Q630T9</accession>
<keyword id="KW-0066">ATP synthesis</keyword>
<keyword id="KW-1003">Cell membrane</keyword>
<keyword id="KW-0138">CF(0)</keyword>
<keyword id="KW-0375">Hydrogen ion transport</keyword>
<keyword id="KW-0406">Ion transport</keyword>
<keyword id="KW-0472">Membrane</keyword>
<keyword id="KW-0812">Transmembrane</keyword>
<keyword id="KW-1133">Transmembrane helix</keyword>
<keyword id="KW-0813">Transport</keyword>
<gene>
    <name evidence="1" type="primary">atpF</name>
    <name type="ordered locus">BCE33L5009</name>
</gene>
<protein>
    <recommendedName>
        <fullName evidence="1">ATP synthase subunit b</fullName>
    </recommendedName>
    <alternativeName>
        <fullName evidence="1">ATP synthase F(0) sector subunit b</fullName>
    </alternativeName>
    <alternativeName>
        <fullName evidence="1">ATPase subunit I</fullName>
    </alternativeName>
    <alternativeName>
        <fullName evidence="1">F-type ATPase subunit b</fullName>
        <shortName evidence="1">F-ATPase subunit b</shortName>
    </alternativeName>
</protein>
<feature type="chain" id="PRO_0000368329" description="ATP synthase subunit b">
    <location>
        <begin position="1"/>
        <end position="168"/>
    </location>
</feature>
<feature type="transmembrane region" description="Helical" evidence="1">
    <location>
        <begin position="9"/>
        <end position="29"/>
    </location>
</feature>
<reference key="1">
    <citation type="journal article" date="2006" name="J. Bacteriol.">
        <title>Pathogenomic sequence analysis of Bacillus cereus and Bacillus thuringiensis isolates closely related to Bacillus anthracis.</title>
        <authorList>
            <person name="Han C.S."/>
            <person name="Xie G."/>
            <person name="Challacombe J.F."/>
            <person name="Altherr M.R."/>
            <person name="Bhotika S.S."/>
            <person name="Bruce D."/>
            <person name="Campbell C.S."/>
            <person name="Campbell M.L."/>
            <person name="Chen J."/>
            <person name="Chertkov O."/>
            <person name="Cleland C."/>
            <person name="Dimitrijevic M."/>
            <person name="Doggett N.A."/>
            <person name="Fawcett J.J."/>
            <person name="Glavina T."/>
            <person name="Goodwin L.A."/>
            <person name="Hill K.K."/>
            <person name="Hitchcock P."/>
            <person name="Jackson P.J."/>
            <person name="Keim P."/>
            <person name="Kewalramani A.R."/>
            <person name="Longmire J."/>
            <person name="Lucas S."/>
            <person name="Malfatti S."/>
            <person name="McMurry K."/>
            <person name="Meincke L.J."/>
            <person name="Misra M."/>
            <person name="Moseman B.L."/>
            <person name="Mundt M."/>
            <person name="Munk A.C."/>
            <person name="Okinaka R.T."/>
            <person name="Parson-Quintana B."/>
            <person name="Reilly L.P."/>
            <person name="Richardson P."/>
            <person name="Robinson D.L."/>
            <person name="Rubin E."/>
            <person name="Saunders E."/>
            <person name="Tapia R."/>
            <person name="Tesmer J.G."/>
            <person name="Thayer N."/>
            <person name="Thompson L.S."/>
            <person name="Tice H."/>
            <person name="Ticknor L.O."/>
            <person name="Wills P.L."/>
            <person name="Brettin T.S."/>
            <person name="Gilna P."/>
        </authorList>
    </citation>
    <scope>NUCLEOTIDE SEQUENCE [LARGE SCALE GENOMIC DNA]</scope>
    <source>
        <strain>ZK / E33L</strain>
    </source>
</reference>
<name>ATPF_BACCZ</name>
<proteinExistence type="inferred from homology"/>